<protein>
    <recommendedName>
        <fullName evidence="1">2-C-methyl-D-erythritol 4-phosphate cytidylyltransferase</fullName>
        <ecNumber evidence="1">2.7.7.60</ecNumber>
    </recommendedName>
    <alternativeName>
        <fullName evidence="1">4-diphosphocytidyl-2C-methyl-D-erythritol synthase</fullName>
    </alternativeName>
    <alternativeName>
        <fullName evidence="1">MEP cytidylyltransferase</fullName>
        <shortName evidence="1">MCT</shortName>
    </alternativeName>
</protein>
<reference key="1">
    <citation type="journal article" date="2005" name="Nucleic Acids Res.">
        <title>Genome dynamics and diversity of Shigella species, the etiologic agents of bacillary dysentery.</title>
        <authorList>
            <person name="Yang F."/>
            <person name="Yang J."/>
            <person name="Zhang X."/>
            <person name="Chen L."/>
            <person name="Jiang Y."/>
            <person name="Yan Y."/>
            <person name="Tang X."/>
            <person name="Wang J."/>
            <person name="Xiong Z."/>
            <person name="Dong J."/>
            <person name="Xue Y."/>
            <person name="Zhu Y."/>
            <person name="Xu X."/>
            <person name="Sun L."/>
            <person name="Chen S."/>
            <person name="Nie H."/>
            <person name="Peng J."/>
            <person name="Xu J."/>
            <person name="Wang Y."/>
            <person name="Yuan Z."/>
            <person name="Wen Y."/>
            <person name="Yao Z."/>
            <person name="Shen Y."/>
            <person name="Qiang B."/>
            <person name="Hou Y."/>
            <person name="Yu J."/>
            <person name="Jin Q."/>
        </authorList>
    </citation>
    <scope>NUCLEOTIDE SEQUENCE [LARGE SCALE GENOMIC DNA]</scope>
    <source>
        <strain>Sb227</strain>
    </source>
</reference>
<organism>
    <name type="scientific">Shigella boydii serotype 4 (strain Sb227)</name>
    <dbReference type="NCBI Taxonomy" id="300268"/>
    <lineage>
        <taxon>Bacteria</taxon>
        <taxon>Pseudomonadati</taxon>
        <taxon>Pseudomonadota</taxon>
        <taxon>Gammaproteobacteria</taxon>
        <taxon>Enterobacterales</taxon>
        <taxon>Enterobacteriaceae</taxon>
        <taxon>Shigella</taxon>
    </lineage>
</organism>
<name>ISPD_SHIBS</name>
<proteinExistence type="inferred from homology"/>
<sequence>MATTHLDVCAVVPAAGFGRRMQTECPKQYLSIGNQTILEHSVHALLAHPRVKRVVIAISPGDSRFAQLPLANHPQITVVDGGDERADSVLAGLKAAGDAQWVLVHDAARPCLHQDDLARLLALSETSRTGGILAAPVRDTMKRAEPGKNAIAHTVDRNGLWHALTPQFFPRELLHDCLTRALNEGATITDEASALEYCGFHPQLVEGRADNIKVTRPEDLALAEFYLTRTIHQENT</sequence>
<feature type="chain" id="PRO_0000237819" description="2-C-methyl-D-erythritol 4-phosphate cytidylyltransferase">
    <location>
        <begin position="1"/>
        <end position="236"/>
    </location>
</feature>
<feature type="site" description="Transition state stabilizer" evidence="1">
    <location>
        <position position="20"/>
    </location>
</feature>
<feature type="site" description="Transition state stabilizer" evidence="1">
    <location>
        <position position="27"/>
    </location>
</feature>
<feature type="site" description="Positions MEP for the nucleophilic attack" evidence="1">
    <location>
        <position position="157"/>
    </location>
</feature>
<feature type="site" description="Positions MEP for the nucleophilic attack" evidence="1">
    <location>
        <position position="213"/>
    </location>
</feature>
<accession>Q31XA9</accession>
<evidence type="ECO:0000255" key="1">
    <source>
        <dbReference type="HAMAP-Rule" id="MF_00108"/>
    </source>
</evidence>
<comment type="function">
    <text evidence="1">Catalyzes the formation of 4-diphosphocytidyl-2-C-methyl-D-erythritol from CTP and 2-C-methyl-D-erythritol 4-phosphate (MEP).</text>
</comment>
<comment type="catalytic activity">
    <reaction evidence="1">
        <text>2-C-methyl-D-erythritol 4-phosphate + CTP + H(+) = 4-CDP-2-C-methyl-D-erythritol + diphosphate</text>
        <dbReference type="Rhea" id="RHEA:13429"/>
        <dbReference type="ChEBI" id="CHEBI:15378"/>
        <dbReference type="ChEBI" id="CHEBI:33019"/>
        <dbReference type="ChEBI" id="CHEBI:37563"/>
        <dbReference type="ChEBI" id="CHEBI:57823"/>
        <dbReference type="ChEBI" id="CHEBI:58262"/>
        <dbReference type="EC" id="2.7.7.60"/>
    </reaction>
</comment>
<comment type="pathway">
    <text evidence="1">Isoprenoid biosynthesis; isopentenyl diphosphate biosynthesis via DXP pathway; isopentenyl diphosphate from 1-deoxy-D-xylulose 5-phosphate: step 2/6.</text>
</comment>
<comment type="subunit">
    <text evidence="1">Homodimer.</text>
</comment>
<comment type="similarity">
    <text evidence="1">Belongs to the IspD/TarI cytidylyltransferase family. IspD subfamily.</text>
</comment>
<dbReference type="EC" id="2.7.7.60" evidence="1"/>
<dbReference type="EMBL" id="CP000036">
    <property type="protein sequence ID" value="ABB67299.1"/>
    <property type="molecule type" value="Genomic_DNA"/>
</dbReference>
<dbReference type="RefSeq" id="WP_000246138.1">
    <property type="nucleotide sequence ID" value="NC_007613.1"/>
</dbReference>
<dbReference type="SMR" id="Q31XA9"/>
<dbReference type="GeneID" id="93779259"/>
<dbReference type="KEGG" id="sbo:SBO_2773"/>
<dbReference type="HOGENOM" id="CLU_061281_3_1_6"/>
<dbReference type="UniPathway" id="UPA00056">
    <property type="reaction ID" value="UER00093"/>
</dbReference>
<dbReference type="Proteomes" id="UP000007067">
    <property type="component" value="Chromosome"/>
</dbReference>
<dbReference type="GO" id="GO:0050518">
    <property type="term" value="F:2-C-methyl-D-erythritol 4-phosphate cytidylyltransferase activity"/>
    <property type="evidence" value="ECO:0007669"/>
    <property type="project" value="UniProtKB-UniRule"/>
</dbReference>
<dbReference type="GO" id="GO:0019288">
    <property type="term" value="P:isopentenyl diphosphate biosynthetic process, methylerythritol 4-phosphate pathway"/>
    <property type="evidence" value="ECO:0007669"/>
    <property type="project" value="UniProtKB-UniRule"/>
</dbReference>
<dbReference type="CDD" id="cd02516">
    <property type="entry name" value="CDP-ME_synthetase"/>
    <property type="match status" value="1"/>
</dbReference>
<dbReference type="FunFam" id="3.90.550.10:FF:000003">
    <property type="entry name" value="2-C-methyl-D-erythritol 4-phosphate cytidylyltransferase"/>
    <property type="match status" value="1"/>
</dbReference>
<dbReference type="Gene3D" id="3.90.550.10">
    <property type="entry name" value="Spore Coat Polysaccharide Biosynthesis Protein SpsA, Chain A"/>
    <property type="match status" value="1"/>
</dbReference>
<dbReference type="HAMAP" id="MF_00108">
    <property type="entry name" value="IspD"/>
    <property type="match status" value="1"/>
</dbReference>
<dbReference type="InterPro" id="IPR001228">
    <property type="entry name" value="IspD"/>
</dbReference>
<dbReference type="InterPro" id="IPR034683">
    <property type="entry name" value="IspD/TarI"/>
</dbReference>
<dbReference type="InterPro" id="IPR050088">
    <property type="entry name" value="IspD/TarI_cytidylyltransf_bact"/>
</dbReference>
<dbReference type="InterPro" id="IPR018294">
    <property type="entry name" value="ISPD_synthase_CS"/>
</dbReference>
<dbReference type="InterPro" id="IPR029044">
    <property type="entry name" value="Nucleotide-diphossugar_trans"/>
</dbReference>
<dbReference type="NCBIfam" id="TIGR00453">
    <property type="entry name" value="ispD"/>
    <property type="match status" value="1"/>
</dbReference>
<dbReference type="PANTHER" id="PTHR32125">
    <property type="entry name" value="2-C-METHYL-D-ERYTHRITOL 4-PHOSPHATE CYTIDYLYLTRANSFERASE, CHLOROPLASTIC"/>
    <property type="match status" value="1"/>
</dbReference>
<dbReference type="PANTHER" id="PTHR32125:SF4">
    <property type="entry name" value="2-C-METHYL-D-ERYTHRITOL 4-PHOSPHATE CYTIDYLYLTRANSFERASE, CHLOROPLASTIC"/>
    <property type="match status" value="1"/>
</dbReference>
<dbReference type="Pfam" id="PF01128">
    <property type="entry name" value="IspD"/>
    <property type="match status" value="1"/>
</dbReference>
<dbReference type="SUPFAM" id="SSF53448">
    <property type="entry name" value="Nucleotide-diphospho-sugar transferases"/>
    <property type="match status" value="1"/>
</dbReference>
<dbReference type="PROSITE" id="PS01295">
    <property type="entry name" value="ISPD"/>
    <property type="match status" value="1"/>
</dbReference>
<gene>
    <name evidence="1" type="primary">ispD</name>
    <name type="ordered locus">SBO_2773</name>
</gene>
<keyword id="KW-0414">Isoprene biosynthesis</keyword>
<keyword id="KW-0548">Nucleotidyltransferase</keyword>
<keyword id="KW-0808">Transferase</keyword>